<evidence type="ECO:0000250" key="1">
    <source>
        <dbReference type="UniProtKB" id="G2QJR6"/>
    </source>
</evidence>
<evidence type="ECO:0000250" key="2">
    <source>
        <dbReference type="UniProtKB" id="P0CT87"/>
    </source>
</evidence>
<evidence type="ECO:0000255" key="3"/>
<evidence type="ECO:0000255" key="4">
    <source>
        <dbReference type="PROSITE-ProRule" id="PRU00498"/>
    </source>
</evidence>
<evidence type="ECO:0000269" key="5">
    <source>
    </source>
</evidence>
<evidence type="ECO:0000305" key="6"/>
<evidence type="ECO:0000305" key="7">
    <source>
    </source>
</evidence>
<proteinExistence type="evidence at protein level"/>
<keyword id="KW-1015">Disulfide bond</keyword>
<keyword id="KW-0325">Glycoprotein</keyword>
<keyword id="KW-0378">Hydrolase</keyword>
<keyword id="KW-0439">Lignin degradation</keyword>
<keyword id="KW-1185">Reference proteome</keyword>
<keyword id="KW-0964">Secreted</keyword>
<keyword id="KW-0719">Serine esterase</keyword>
<keyword id="KW-0732">Signal</keyword>
<dbReference type="EC" id="3.1.1.117" evidence="5"/>
<dbReference type="EMBL" id="KB468053">
    <property type="protein sequence ID" value="PCH39808.1"/>
    <property type="molecule type" value="Genomic_DNA"/>
</dbReference>
<dbReference type="SMR" id="P0CU53"/>
<dbReference type="STRING" id="742152.P0CU53"/>
<dbReference type="ESTHER" id="wolco-gce1">
    <property type="family name" value="Glucuronoyl_esterase"/>
</dbReference>
<dbReference type="OMA" id="EQPWLGD"/>
<dbReference type="OrthoDB" id="3781271at2759"/>
<dbReference type="BRENDA" id="3.1.1.117">
    <property type="organism ID" value="4987"/>
</dbReference>
<dbReference type="Proteomes" id="UP000218811">
    <property type="component" value="Unassembled WGS sequence"/>
</dbReference>
<dbReference type="GO" id="GO:0005576">
    <property type="term" value="C:extracellular region"/>
    <property type="evidence" value="ECO:0007669"/>
    <property type="project" value="UniProtKB-SubCell"/>
</dbReference>
<dbReference type="GO" id="GO:0052689">
    <property type="term" value="F:carboxylic ester hydrolase activity"/>
    <property type="evidence" value="ECO:0007669"/>
    <property type="project" value="UniProtKB-KW"/>
</dbReference>
<dbReference type="GO" id="GO:0046274">
    <property type="term" value="P:lignin catabolic process"/>
    <property type="evidence" value="ECO:0007669"/>
    <property type="project" value="UniProtKB-KW"/>
</dbReference>
<dbReference type="Gene3D" id="3.40.50.1820">
    <property type="entry name" value="alpha/beta hydrolase"/>
    <property type="match status" value="1"/>
</dbReference>
<dbReference type="InterPro" id="IPR029058">
    <property type="entry name" value="AB_hydrolase_fold"/>
</dbReference>
<dbReference type="InterPro" id="IPR054579">
    <property type="entry name" value="GCE-like_dom"/>
</dbReference>
<dbReference type="Pfam" id="PF22244">
    <property type="entry name" value="GCE_fung"/>
    <property type="match status" value="1"/>
</dbReference>
<dbReference type="SUPFAM" id="SSF53474">
    <property type="entry name" value="alpha/beta-Hydrolases"/>
    <property type="match status" value="1"/>
</dbReference>
<gene>
    <name type="ORF">WOLCODRAFT_23632</name>
</gene>
<feature type="signal peptide" evidence="3">
    <location>
        <begin position="1"/>
        <end position="19"/>
    </location>
</feature>
<feature type="chain" id="PRO_0000441411" description="4-O-methyl-glucuronoyl methylesterase 1" evidence="3">
    <location>
        <begin position="20"/>
        <end position="408"/>
    </location>
</feature>
<feature type="short sequence motif" description="GXSYXG catalytic site motif" evidence="1">
    <location>
        <begin position="217"/>
        <end position="222"/>
    </location>
</feature>
<feature type="active site" description="Nucleophile" evidence="1">
    <location>
        <position position="219"/>
    </location>
</feature>
<feature type="active site" description="Proton donor/acceptor" evidence="1">
    <location>
        <position position="353"/>
    </location>
</feature>
<feature type="binding site" evidence="1">
    <location>
        <position position="223"/>
    </location>
    <ligand>
        <name>substrate</name>
    </ligand>
</feature>
<feature type="binding site" evidence="1">
    <location>
        <position position="265"/>
    </location>
    <ligand>
        <name>substrate</name>
    </ligand>
</feature>
<feature type="binding site" evidence="1">
    <location>
        <position position="273"/>
    </location>
    <ligand>
        <name>substrate</name>
    </ligand>
</feature>
<feature type="binding site" evidence="1">
    <location>
        <position position="317"/>
    </location>
    <ligand>
        <name>substrate</name>
    </ligand>
</feature>
<feature type="glycosylation site" description="N-linked (GlcNAc...) asparagine" evidence="4">
    <location>
        <position position="287"/>
    </location>
</feature>
<feature type="glycosylation site" description="N-linked (GlcNAc...) asparagine" evidence="4">
    <location>
        <position position="350"/>
    </location>
</feature>
<feature type="glycosylation site" description="N-linked (GlcNAc...) asparagine" evidence="4">
    <location>
        <position position="390"/>
    </location>
</feature>
<feature type="glycosylation site" description="N-linked (GlcNAc...) asparagine" evidence="4">
    <location>
        <position position="395"/>
    </location>
</feature>
<feature type="glycosylation site" description="N-linked (GlcNAc...) asparagine" evidence="4">
    <location>
        <position position="401"/>
    </location>
</feature>
<feature type="disulfide bond" evidence="1">
    <location>
        <begin position="31"/>
        <end position="65"/>
    </location>
</feature>
<feature type="disulfide bond" evidence="1">
    <location>
        <begin position="218"/>
        <end position="354"/>
    </location>
</feature>
<feature type="disulfide bond" evidence="1">
    <location>
        <begin position="250"/>
        <end position="326"/>
    </location>
</feature>
<comment type="function">
    <text evidence="5">Glucuronoyl esterase which may play a significant role in biomass degradation, as it is considered to disconnect hemicellulose from lignin through the hydrolysis of the ester bond between 4-O-methyl-D-glucuronic acid residues of glucuronoxylans and aromatic alcohols of lignin. Can hydrolyze benzyl glucuronic acid (BnGlcA), allyl glucuronic acid (allylGlcA) and to a lower degree methyl glucuronic acid (MeGlcA) in vitro.</text>
</comment>
<comment type="catalytic activity">
    <reaction evidence="5">
        <text>a 4-O-methyl-alpha-D-glucuronosyl ester derivative + H2O = 4-O-methyl-alpha-D-glucuronate derivative + an alcohol + H(+)</text>
        <dbReference type="Rhea" id="RHEA:67452"/>
        <dbReference type="ChEBI" id="CHEBI:15377"/>
        <dbReference type="ChEBI" id="CHEBI:15378"/>
        <dbReference type="ChEBI" id="CHEBI:30879"/>
        <dbReference type="ChEBI" id="CHEBI:171667"/>
        <dbReference type="ChEBI" id="CHEBI:171668"/>
        <dbReference type="EC" id="3.1.1.117"/>
    </reaction>
    <physiologicalReaction direction="left-to-right" evidence="7">
        <dbReference type="Rhea" id="RHEA:67453"/>
    </physiologicalReaction>
</comment>
<comment type="biophysicochemical properties">
    <kinetics>
        <KM evidence="5">3.4 mM for benzyl glucuronic acid</KM>
        <Vmax evidence="5">1.91 umol/min/mg enzyme for benzyl glucuronic acid</Vmax>
    </kinetics>
</comment>
<comment type="subcellular location">
    <subcellularLocation>
        <location evidence="2">Secreted</location>
    </subcellularLocation>
</comment>
<comment type="similarity">
    <text evidence="6">Belongs to the carbohydrate esterase 15 (CE15) family.</text>
</comment>
<sequence length="408" mass="44123">MASSSRFAALLLLALPALALPPSQVVPRAACATPSTVPGYNNDRLPDPFLFDDGTAVTSSADWDCRRSQIAAVVQGYEAGYLPPQPPIVSATFSSSDGTGTLTVTAGLSSDNTISFSEPITYPSGTAPAAGWPLVIAYDVLSIPVPDGIAVMVYNNDDIAQENDLSSRGVGLFYDLYGTDATASAMTAWVWGVSRIIDALETTPAANINTAKIAVTGCSRDGKGALMAGAFEPRVALTIPQESGSGGDTCWRLSKYEQDSGDVVQQATEIVTENVWFSTNFDNYVNNLSVLPYDHHELAAMVAPRPLLSYENTEYEWLSPLSAYGCMSAAHTVYEALGIPDYHGFVQVGNHSHCYFPDTLDDSLYAFFDRFLLDEDDVSTDYFTTNYQFNGTVWNASYWINWTTPQLD</sequence>
<protein>
    <recommendedName>
        <fullName evidence="6">4-O-methyl-glucuronoyl methylesterase 1</fullName>
        <ecNumber evidence="5">3.1.1.117</ecNumber>
    </recommendedName>
    <alternativeName>
        <fullName>Glucuronoyl esterase 1</fullName>
        <shortName>GE1</shortName>
    </alternativeName>
</protein>
<accession>P0CU53</accession>
<accession>A0A2H3JPZ0</accession>
<name>GCE1_WOLCO</name>
<organism>
    <name type="scientific">Wolfiporia cocos (strain MD-104)</name>
    <name type="common">Brown rot fungus</name>
    <dbReference type="NCBI Taxonomy" id="742152"/>
    <lineage>
        <taxon>Eukaryota</taxon>
        <taxon>Fungi</taxon>
        <taxon>Dikarya</taxon>
        <taxon>Basidiomycota</taxon>
        <taxon>Agaricomycotina</taxon>
        <taxon>Agaricomycetes</taxon>
        <taxon>Polyporales</taxon>
        <taxon>Phaeolaceae</taxon>
        <taxon>Wolfiporia</taxon>
    </lineage>
</organism>
<reference key="1">
    <citation type="journal article" date="2012" name="Science">
        <title>The Paleozoic origin of enzymatic lignin decomposition reconstructed from 31 fungal genomes.</title>
        <authorList>
            <person name="Floudas D."/>
            <person name="Binder M."/>
            <person name="Riley R."/>
            <person name="Barry K."/>
            <person name="Blanchette R.A."/>
            <person name="Henrissat B."/>
            <person name="Martinez A.T."/>
            <person name="Otillar R."/>
            <person name="Spatafora J.W."/>
            <person name="Yadav J.S."/>
            <person name="Aerts A."/>
            <person name="Benoit I."/>
            <person name="Boyd A."/>
            <person name="Carlson A."/>
            <person name="Copeland A."/>
            <person name="Coutinho P.M."/>
            <person name="de Vries R.P."/>
            <person name="Ferreira P."/>
            <person name="Findley K."/>
            <person name="Foster B."/>
            <person name="Gaskell J."/>
            <person name="Glotzer D."/>
            <person name="Gorecki P."/>
            <person name="Heitman J."/>
            <person name="Hesse C."/>
            <person name="Hori C."/>
            <person name="Igarashi K."/>
            <person name="Jurgens J.A."/>
            <person name="Kallen N."/>
            <person name="Kersten P."/>
            <person name="Kohler A."/>
            <person name="Kuees U."/>
            <person name="Kumar T.K.A."/>
            <person name="Kuo A."/>
            <person name="LaButti K."/>
            <person name="Larrondo L.F."/>
            <person name="Lindquist E."/>
            <person name="Ling A."/>
            <person name="Lombard V."/>
            <person name="Lucas S."/>
            <person name="Lundell T."/>
            <person name="Martin R."/>
            <person name="McLaughlin D.J."/>
            <person name="Morgenstern I."/>
            <person name="Morin E."/>
            <person name="Murat C."/>
            <person name="Nagy L.G."/>
            <person name="Nolan M."/>
            <person name="Ohm R.A."/>
            <person name="Patyshakuliyeva A."/>
            <person name="Rokas A."/>
            <person name="Ruiz-Duenas F.J."/>
            <person name="Sabat G."/>
            <person name="Salamov A."/>
            <person name="Samejima M."/>
            <person name="Schmutz J."/>
            <person name="Slot J.C."/>
            <person name="St John F."/>
            <person name="Stenlid J."/>
            <person name="Sun H."/>
            <person name="Sun S."/>
            <person name="Syed K."/>
            <person name="Tsang A."/>
            <person name="Wiebenga A."/>
            <person name="Young D."/>
            <person name="Pisabarro A."/>
            <person name="Eastwood D.C."/>
            <person name="Martin F."/>
            <person name="Cullen D."/>
            <person name="Grigoriev I.V."/>
            <person name="Hibbett D.S."/>
        </authorList>
    </citation>
    <scope>NUCLEOTIDE SEQUENCE [LARGE SCALE GENOMIC DNA]</scope>
    <source>
        <strain>MD-104</strain>
    </source>
</reference>
<reference key="2">
    <citation type="journal article" date="2017" name="Appl. Microbiol. Biotechnol.">
        <title>Characterisation of three fungal glucuronoyl esterases on glucuronic acid ester model compounds.</title>
        <authorList>
            <person name="Huettner S."/>
            <person name="Klaubauf S."/>
            <person name="de Vries R.P."/>
            <person name="Olsson L."/>
        </authorList>
    </citation>
    <scope>FUNCTION</scope>
    <scope>CATALYTIC ACTIVITY</scope>
    <scope>BIOPHYSICOCHEMICAL PROPERTIES</scope>
</reference>